<gene>
    <name evidence="1" type="primary">hemL</name>
    <name type="ordered locus">CJE0940</name>
</gene>
<protein>
    <recommendedName>
        <fullName evidence="1">Glutamate-1-semialdehyde 2,1-aminomutase</fullName>
        <shortName evidence="1">GSA</shortName>
        <ecNumber evidence="1">5.4.3.8</ecNumber>
    </recommendedName>
    <alternativeName>
        <fullName evidence="1">Glutamate-1-semialdehyde aminotransferase</fullName>
        <shortName evidence="1">GSA-AT</shortName>
    </alternativeName>
</protein>
<organism>
    <name type="scientific">Campylobacter jejuni (strain RM1221)</name>
    <dbReference type="NCBI Taxonomy" id="195099"/>
    <lineage>
        <taxon>Bacteria</taxon>
        <taxon>Pseudomonadati</taxon>
        <taxon>Campylobacterota</taxon>
        <taxon>Epsilonproteobacteria</taxon>
        <taxon>Campylobacterales</taxon>
        <taxon>Campylobacteraceae</taxon>
        <taxon>Campylobacter</taxon>
    </lineage>
</organism>
<reference key="1">
    <citation type="journal article" date="2005" name="PLoS Biol.">
        <title>Major structural differences and novel potential virulence mechanisms from the genomes of multiple Campylobacter species.</title>
        <authorList>
            <person name="Fouts D.E."/>
            <person name="Mongodin E.F."/>
            <person name="Mandrell R.E."/>
            <person name="Miller W.G."/>
            <person name="Rasko D.A."/>
            <person name="Ravel J."/>
            <person name="Brinkac L.M."/>
            <person name="DeBoy R.T."/>
            <person name="Parker C.T."/>
            <person name="Daugherty S.C."/>
            <person name="Dodson R.J."/>
            <person name="Durkin A.S."/>
            <person name="Madupu R."/>
            <person name="Sullivan S.A."/>
            <person name="Shetty J.U."/>
            <person name="Ayodeji M.A."/>
            <person name="Shvartsbeyn A."/>
            <person name="Schatz M.C."/>
            <person name="Badger J.H."/>
            <person name="Fraser C.M."/>
            <person name="Nelson K.E."/>
        </authorList>
    </citation>
    <scope>NUCLEOTIDE SEQUENCE [LARGE SCALE GENOMIC DNA]</scope>
    <source>
        <strain>RM1221</strain>
    </source>
</reference>
<proteinExistence type="inferred from homology"/>
<comment type="catalytic activity">
    <reaction evidence="1">
        <text>(S)-4-amino-5-oxopentanoate = 5-aminolevulinate</text>
        <dbReference type="Rhea" id="RHEA:14265"/>
        <dbReference type="ChEBI" id="CHEBI:57501"/>
        <dbReference type="ChEBI" id="CHEBI:356416"/>
        <dbReference type="EC" id="5.4.3.8"/>
    </reaction>
</comment>
<comment type="cofactor">
    <cofactor evidence="1">
        <name>pyridoxal 5'-phosphate</name>
        <dbReference type="ChEBI" id="CHEBI:597326"/>
    </cofactor>
</comment>
<comment type="pathway">
    <text evidence="1">Porphyrin-containing compound metabolism; protoporphyrin-IX biosynthesis; 5-aminolevulinate from L-glutamyl-tRNA(Glu): step 2/2.</text>
</comment>
<comment type="subunit">
    <text evidence="1">Homodimer.</text>
</comment>
<comment type="subcellular location">
    <subcellularLocation>
        <location evidence="1">Cytoplasm</location>
    </subcellularLocation>
</comment>
<comment type="similarity">
    <text evidence="1">Belongs to the class-III pyridoxal-phosphate-dependent aminotransferase family. HemL subfamily.</text>
</comment>
<accession>Q5HUU3</accession>
<keyword id="KW-0963">Cytoplasm</keyword>
<keyword id="KW-0413">Isomerase</keyword>
<keyword id="KW-0627">Porphyrin biosynthesis</keyword>
<keyword id="KW-0663">Pyridoxal phosphate</keyword>
<name>GSA_CAMJR</name>
<evidence type="ECO:0000255" key="1">
    <source>
        <dbReference type="HAMAP-Rule" id="MF_00375"/>
    </source>
</evidence>
<dbReference type="EC" id="5.4.3.8" evidence="1"/>
<dbReference type="EMBL" id="CP000025">
    <property type="protein sequence ID" value="AAW35277.1"/>
    <property type="molecule type" value="Genomic_DNA"/>
</dbReference>
<dbReference type="RefSeq" id="WP_002860511.1">
    <property type="nucleotide sequence ID" value="NC_003912.7"/>
</dbReference>
<dbReference type="SMR" id="Q5HUU3"/>
<dbReference type="KEGG" id="cjr:CJE0940"/>
<dbReference type="HOGENOM" id="CLU_016922_1_5_7"/>
<dbReference type="UniPathway" id="UPA00251">
    <property type="reaction ID" value="UER00317"/>
</dbReference>
<dbReference type="GO" id="GO:0005737">
    <property type="term" value="C:cytoplasm"/>
    <property type="evidence" value="ECO:0007669"/>
    <property type="project" value="UniProtKB-SubCell"/>
</dbReference>
<dbReference type="GO" id="GO:0042286">
    <property type="term" value="F:glutamate-1-semialdehyde 2,1-aminomutase activity"/>
    <property type="evidence" value="ECO:0007669"/>
    <property type="project" value="UniProtKB-UniRule"/>
</dbReference>
<dbReference type="GO" id="GO:0030170">
    <property type="term" value="F:pyridoxal phosphate binding"/>
    <property type="evidence" value="ECO:0007669"/>
    <property type="project" value="InterPro"/>
</dbReference>
<dbReference type="GO" id="GO:0008483">
    <property type="term" value="F:transaminase activity"/>
    <property type="evidence" value="ECO:0007669"/>
    <property type="project" value="InterPro"/>
</dbReference>
<dbReference type="GO" id="GO:0006782">
    <property type="term" value="P:protoporphyrinogen IX biosynthetic process"/>
    <property type="evidence" value="ECO:0007669"/>
    <property type="project" value="UniProtKB-UniRule"/>
</dbReference>
<dbReference type="CDD" id="cd00610">
    <property type="entry name" value="OAT_like"/>
    <property type="match status" value="1"/>
</dbReference>
<dbReference type="FunFam" id="3.40.640.10:FF:000021">
    <property type="entry name" value="Glutamate-1-semialdehyde 2,1-aminomutase"/>
    <property type="match status" value="1"/>
</dbReference>
<dbReference type="Gene3D" id="3.90.1150.10">
    <property type="entry name" value="Aspartate Aminotransferase, domain 1"/>
    <property type="match status" value="1"/>
</dbReference>
<dbReference type="Gene3D" id="3.40.640.10">
    <property type="entry name" value="Type I PLP-dependent aspartate aminotransferase-like (Major domain)"/>
    <property type="match status" value="1"/>
</dbReference>
<dbReference type="HAMAP" id="MF_00375">
    <property type="entry name" value="HemL_aminotrans_3"/>
    <property type="match status" value="1"/>
</dbReference>
<dbReference type="InterPro" id="IPR004639">
    <property type="entry name" value="4pyrrol_synth_GluAld_NH2Trfase"/>
</dbReference>
<dbReference type="InterPro" id="IPR005814">
    <property type="entry name" value="Aminotrans_3"/>
</dbReference>
<dbReference type="InterPro" id="IPR049704">
    <property type="entry name" value="Aminotrans_3_PPA_site"/>
</dbReference>
<dbReference type="InterPro" id="IPR015424">
    <property type="entry name" value="PyrdxlP-dep_Trfase"/>
</dbReference>
<dbReference type="InterPro" id="IPR015421">
    <property type="entry name" value="PyrdxlP-dep_Trfase_major"/>
</dbReference>
<dbReference type="InterPro" id="IPR015422">
    <property type="entry name" value="PyrdxlP-dep_Trfase_small"/>
</dbReference>
<dbReference type="NCBIfam" id="TIGR00713">
    <property type="entry name" value="hemL"/>
    <property type="match status" value="1"/>
</dbReference>
<dbReference type="NCBIfam" id="NF000818">
    <property type="entry name" value="PRK00062.1"/>
    <property type="match status" value="1"/>
</dbReference>
<dbReference type="PANTHER" id="PTHR43713">
    <property type="entry name" value="GLUTAMATE-1-SEMIALDEHYDE 2,1-AMINOMUTASE"/>
    <property type="match status" value="1"/>
</dbReference>
<dbReference type="PANTHER" id="PTHR43713:SF3">
    <property type="entry name" value="GLUTAMATE-1-SEMIALDEHYDE 2,1-AMINOMUTASE 1, CHLOROPLASTIC-RELATED"/>
    <property type="match status" value="1"/>
</dbReference>
<dbReference type="Pfam" id="PF00202">
    <property type="entry name" value="Aminotran_3"/>
    <property type="match status" value="1"/>
</dbReference>
<dbReference type="SUPFAM" id="SSF53383">
    <property type="entry name" value="PLP-dependent transferases"/>
    <property type="match status" value="1"/>
</dbReference>
<dbReference type="PROSITE" id="PS00600">
    <property type="entry name" value="AA_TRANSFER_CLASS_3"/>
    <property type="match status" value="1"/>
</dbReference>
<sequence>MTNKKAFKEACKFIAGGVNSPVRAFANVQSEPKFISHGKGAYIFDIDGNSYIDYVQSWGPLLFGHCDKDIQKACQKALHKGSSFGAPTLLETELAKLVLSDFPHLEKIRFVSSGTEATMSAIRLARGFTKKDKILKFEGCYHGHSDSLLVSAGSGAATFNSPSSLGVLEDVAKHTLVAKYNDINSVKELFEKNKDIACVIIEPIAGNMGLVPAKQDFLEELAKICKNNQTLLIFDEVMSGYRASYLGSYGINHIQADIITFGKVIGGGLPAAAFASRAEIMDILSPLGGVYQAGTLSGNPLAMAAGIASLTKAKKKTKLYDKLGKLAKKLTQGMKKLADEKGLPLQVCHVGSMFGYFFTKDPVSNYQDALKSDLALFSKFHKNMLENGIYLAPSQFETGFICSKMDDKIIDTTLEAVRESFKRI</sequence>
<feature type="chain" id="PRO_0000120397" description="Glutamate-1-semialdehyde 2,1-aminomutase">
    <location>
        <begin position="1"/>
        <end position="424"/>
    </location>
</feature>
<feature type="modified residue" description="N6-(pyridoxal phosphate)lysine" evidence="1">
    <location>
        <position position="263"/>
    </location>
</feature>